<sequence>MDYTLTRIDPNGENDRYPLQKQEIVTDPLEQEINKSVYMGKLEHAMHDMVNWGRKNSIWPYNFGLSCCYVEMVTSFTAVHDVARFGAEVLRASPRQADLMVVAGTCFTKMAPVIQRLYDQMLEPKWVISMGACANSGGMYDIYSVVQGVDKFIPVDVYIPGCPPRPEAYMQALMLLQDSIGKERRPLSWVVGDQGVYRANMQSERERKRGERIAVTNLRTPDEI</sequence>
<proteinExistence type="inferred from homology"/>
<protein>
    <recommendedName>
        <fullName evidence="1">NADH-quinone oxidoreductase subunit B</fullName>
        <ecNumber evidence="1">7.1.1.-</ecNumber>
    </recommendedName>
    <alternativeName>
        <fullName evidence="1">NADH dehydrogenase I subunit B</fullName>
    </alternativeName>
    <alternativeName>
        <fullName evidence="1">NDH-1 subunit B</fullName>
    </alternativeName>
</protein>
<name>NUOB_ENT38</name>
<gene>
    <name evidence="1" type="primary">nuoB</name>
    <name type="ordered locus">Ent638_2831</name>
</gene>
<evidence type="ECO:0000255" key="1">
    <source>
        <dbReference type="HAMAP-Rule" id="MF_01356"/>
    </source>
</evidence>
<dbReference type="EC" id="7.1.1.-" evidence="1"/>
<dbReference type="EMBL" id="CP000653">
    <property type="protein sequence ID" value="ABP61496.1"/>
    <property type="molecule type" value="Genomic_DNA"/>
</dbReference>
<dbReference type="RefSeq" id="WP_015959829.1">
    <property type="nucleotide sequence ID" value="NC_009436.1"/>
</dbReference>
<dbReference type="SMR" id="A4WCR6"/>
<dbReference type="STRING" id="399742.Ent638_2831"/>
<dbReference type="GeneID" id="93305798"/>
<dbReference type="KEGG" id="ent:Ent638_2831"/>
<dbReference type="eggNOG" id="COG0377">
    <property type="taxonomic scope" value="Bacteria"/>
</dbReference>
<dbReference type="HOGENOM" id="CLU_055737_7_3_6"/>
<dbReference type="OrthoDB" id="9786737at2"/>
<dbReference type="Proteomes" id="UP000000230">
    <property type="component" value="Chromosome"/>
</dbReference>
<dbReference type="GO" id="GO:0005886">
    <property type="term" value="C:plasma membrane"/>
    <property type="evidence" value="ECO:0007669"/>
    <property type="project" value="UniProtKB-SubCell"/>
</dbReference>
<dbReference type="GO" id="GO:0045271">
    <property type="term" value="C:respiratory chain complex I"/>
    <property type="evidence" value="ECO:0007669"/>
    <property type="project" value="TreeGrafter"/>
</dbReference>
<dbReference type="GO" id="GO:0051539">
    <property type="term" value="F:4 iron, 4 sulfur cluster binding"/>
    <property type="evidence" value="ECO:0007669"/>
    <property type="project" value="UniProtKB-KW"/>
</dbReference>
<dbReference type="GO" id="GO:0005506">
    <property type="term" value="F:iron ion binding"/>
    <property type="evidence" value="ECO:0007669"/>
    <property type="project" value="UniProtKB-UniRule"/>
</dbReference>
<dbReference type="GO" id="GO:0008137">
    <property type="term" value="F:NADH dehydrogenase (ubiquinone) activity"/>
    <property type="evidence" value="ECO:0007669"/>
    <property type="project" value="InterPro"/>
</dbReference>
<dbReference type="GO" id="GO:0050136">
    <property type="term" value="F:NADH:ubiquinone reductase (non-electrogenic) activity"/>
    <property type="evidence" value="ECO:0007669"/>
    <property type="project" value="UniProtKB-UniRule"/>
</dbReference>
<dbReference type="GO" id="GO:0048038">
    <property type="term" value="F:quinone binding"/>
    <property type="evidence" value="ECO:0007669"/>
    <property type="project" value="UniProtKB-KW"/>
</dbReference>
<dbReference type="GO" id="GO:0009060">
    <property type="term" value="P:aerobic respiration"/>
    <property type="evidence" value="ECO:0007669"/>
    <property type="project" value="TreeGrafter"/>
</dbReference>
<dbReference type="GO" id="GO:0015990">
    <property type="term" value="P:electron transport coupled proton transport"/>
    <property type="evidence" value="ECO:0007669"/>
    <property type="project" value="TreeGrafter"/>
</dbReference>
<dbReference type="FunFam" id="3.40.50.12280:FF:000002">
    <property type="entry name" value="NADH-quinone oxidoreductase subunit B"/>
    <property type="match status" value="1"/>
</dbReference>
<dbReference type="Gene3D" id="3.40.50.12280">
    <property type="match status" value="1"/>
</dbReference>
<dbReference type="HAMAP" id="MF_01356">
    <property type="entry name" value="NDH1_NuoB"/>
    <property type="match status" value="1"/>
</dbReference>
<dbReference type="InterPro" id="IPR006137">
    <property type="entry name" value="NADH_UbQ_OxRdtase-like_20kDa"/>
</dbReference>
<dbReference type="InterPro" id="IPR006138">
    <property type="entry name" value="NADH_UQ_OxRdtase_20Kd_su"/>
</dbReference>
<dbReference type="NCBIfam" id="TIGR01957">
    <property type="entry name" value="nuoB_fam"/>
    <property type="match status" value="1"/>
</dbReference>
<dbReference type="NCBIfam" id="NF005012">
    <property type="entry name" value="PRK06411.1"/>
    <property type="match status" value="1"/>
</dbReference>
<dbReference type="PANTHER" id="PTHR11995">
    <property type="entry name" value="NADH DEHYDROGENASE"/>
    <property type="match status" value="1"/>
</dbReference>
<dbReference type="PANTHER" id="PTHR11995:SF14">
    <property type="entry name" value="NADH DEHYDROGENASE [UBIQUINONE] IRON-SULFUR PROTEIN 7, MITOCHONDRIAL"/>
    <property type="match status" value="1"/>
</dbReference>
<dbReference type="Pfam" id="PF01058">
    <property type="entry name" value="Oxidored_q6"/>
    <property type="match status" value="1"/>
</dbReference>
<dbReference type="SUPFAM" id="SSF56770">
    <property type="entry name" value="HydA/Nqo6-like"/>
    <property type="match status" value="1"/>
</dbReference>
<dbReference type="PROSITE" id="PS01150">
    <property type="entry name" value="COMPLEX1_20K"/>
    <property type="match status" value="1"/>
</dbReference>
<organism>
    <name type="scientific">Enterobacter sp. (strain 638)</name>
    <dbReference type="NCBI Taxonomy" id="399742"/>
    <lineage>
        <taxon>Bacteria</taxon>
        <taxon>Pseudomonadati</taxon>
        <taxon>Pseudomonadota</taxon>
        <taxon>Gammaproteobacteria</taxon>
        <taxon>Enterobacterales</taxon>
        <taxon>Enterobacteriaceae</taxon>
        <taxon>Enterobacter</taxon>
    </lineage>
</organism>
<accession>A4WCR6</accession>
<comment type="function">
    <text evidence="1">NDH-1 shuttles electrons from NADH, via FMN and iron-sulfur (Fe-S) centers, to quinones in the respiratory chain. The immediate electron acceptor for the enzyme in this species is believed to be ubiquinone. Couples the redox reaction to proton translocation (for every two electrons transferred, four hydrogen ions are translocated across the cytoplasmic membrane), and thus conserves the redox energy in a proton gradient.</text>
</comment>
<comment type="catalytic activity">
    <reaction evidence="1">
        <text>a quinone + NADH + 5 H(+)(in) = a quinol + NAD(+) + 4 H(+)(out)</text>
        <dbReference type="Rhea" id="RHEA:57888"/>
        <dbReference type="ChEBI" id="CHEBI:15378"/>
        <dbReference type="ChEBI" id="CHEBI:24646"/>
        <dbReference type="ChEBI" id="CHEBI:57540"/>
        <dbReference type="ChEBI" id="CHEBI:57945"/>
        <dbReference type="ChEBI" id="CHEBI:132124"/>
    </reaction>
</comment>
<comment type="cofactor">
    <cofactor evidence="1">
        <name>[4Fe-4S] cluster</name>
        <dbReference type="ChEBI" id="CHEBI:49883"/>
    </cofactor>
    <text evidence="1">Binds 1 [4Fe-4S] cluster.</text>
</comment>
<comment type="subunit">
    <text evidence="1">NDH-1 is composed of 13 different subunits. Subunits NuoB, CD, E, F, and G constitute the peripheral sector of the complex.</text>
</comment>
<comment type="subcellular location">
    <subcellularLocation>
        <location evidence="1">Cell inner membrane</location>
        <topology evidence="1">Peripheral membrane protein</topology>
        <orientation evidence="1">Cytoplasmic side</orientation>
    </subcellularLocation>
</comment>
<comment type="similarity">
    <text evidence="1">Belongs to the complex I 20 kDa subunit family.</text>
</comment>
<reference key="1">
    <citation type="journal article" date="2010" name="PLoS Genet.">
        <title>Genome sequence of the plant growth promoting endophytic bacterium Enterobacter sp. 638.</title>
        <authorList>
            <person name="Taghavi S."/>
            <person name="van der Lelie D."/>
            <person name="Hoffman A."/>
            <person name="Zhang Y.B."/>
            <person name="Walla M.D."/>
            <person name="Vangronsveld J."/>
            <person name="Newman L."/>
            <person name="Monchy S."/>
        </authorList>
    </citation>
    <scope>NUCLEOTIDE SEQUENCE [LARGE SCALE GENOMIC DNA]</scope>
    <source>
        <strain>638</strain>
    </source>
</reference>
<keyword id="KW-0004">4Fe-4S</keyword>
<keyword id="KW-0997">Cell inner membrane</keyword>
<keyword id="KW-1003">Cell membrane</keyword>
<keyword id="KW-0408">Iron</keyword>
<keyword id="KW-0411">Iron-sulfur</keyword>
<keyword id="KW-0472">Membrane</keyword>
<keyword id="KW-0479">Metal-binding</keyword>
<keyword id="KW-0520">NAD</keyword>
<keyword id="KW-0874">Quinone</keyword>
<keyword id="KW-1278">Translocase</keyword>
<keyword id="KW-0813">Transport</keyword>
<keyword id="KW-0830">Ubiquinone</keyword>
<feature type="chain" id="PRO_0000376203" description="NADH-quinone oxidoreductase subunit B">
    <location>
        <begin position="1"/>
        <end position="224"/>
    </location>
</feature>
<feature type="binding site" evidence="1">
    <location>
        <position position="67"/>
    </location>
    <ligand>
        <name>[4Fe-4S] cluster</name>
        <dbReference type="ChEBI" id="CHEBI:49883"/>
    </ligand>
</feature>
<feature type="binding site" evidence="1">
    <location>
        <position position="68"/>
    </location>
    <ligand>
        <name>[4Fe-4S] cluster</name>
        <dbReference type="ChEBI" id="CHEBI:49883"/>
    </ligand>
</feature>
<feature type="binding site" evidence="1">
    <location>
        <position position="133"/>
    </location>
    <ligand>
        <name>[4Fe-4S] cluster</name>
        <dbReference type="ChEBI" id="CHEBI:49883"/>
    </ligand>
</feature>
<feature type="binding site" evidence="1">
    <location>
        <position position="162"/>
    </location>
    <ligand>
        <name>[4Fe-4S] cluster</name>
        <dbReference type="ChEBI" id="CHEBI:49883"/>
    </ligand>
</feature>